<sequence length="253" mass="29089">MNTVANADFNGIVMFERSHRENDLLVKFLTKEHGKRMFFIRNAKKVDFKLRSAILPFSHGQYTGLIRSNGLSYINAALDVQQFENIFQDITLNAYATFVLNLVDAAFDDNVKITSWFERINRALILIDAGNDAEIITDLIQIQLLNSFGISITWDHCVICGRTDLPLDYSEAFGGMLCQSHWERDEHRWHLKPKSARIIGILSAVSIFKLGQISISKETKQEIWNLTADIYKNQVGINLKSRSFIDQMKKWEI</sequence>
<name>RECO_PEDPA</name>
<protein>
    <recommendedName>
        <fullName evidence="1">DNA repair protein RecO</fullName>
    </recommendedName>
    <alternativeName>
        <fullName evidence="1">Recombination protein O</fullName>
    </alternativeName>
</protein>
<accession>Q03F64</accession>
<comment type="function">
    <text evidence="1">Involved in DNA repair and RecF pathway recombination.</text>
</comment>
<comment type="similarity">
    <text evidence="1">Belongs to the RecO family.</text>
</comment>
<feature type="chain" id="PRO_0000325207" description="DNA repair protein RecO">
    <location>
        <begin position="1"/>
        <end position="253"/>
    </location>
</feature>
<reference key="1">
    <citation type="journal article" date="2006" name="Proc. Natl. Acad. Sci. U.S.A.">
        <title>Comparative genomics of the lactic acid bacteria.</title>
        <authorList>
            <person name="Makarova K.S."/>
            <person name="Slesarev A."/>
            <person name="Wolf Y.I."/>
            <person name="Sorokin A."/>
            <person name="Mirkin B."/>
            <person name="Koonin E.V."/>
            <person name="Pavlov A."/>
            <person name="Pavlova N."/>
            <person name="Karamychev V."/>
            <person name="Polouchine N."/>
            <person name="Shakhova V."/>
            <person name="Grigoriev I."/>
            <person name="Lou Y."/>
            <person name="Rohksar D."/>
            <person name="Lucas S."/>
            <person name="Huang K."/>
            <person name="Goodstein D.M."/>
            <person name="Hawkins T."/>
            <person name="Plengvidhya V."/>
            <person name="Welker D."/>
            <person name="Hughes J."/>
            <person name="Goh Y."/>
            <person name="Benson A."/>
            <person name="Baldwin K."/>
            <person name="Lee J.-H."/>
            <person name="Diaz-Muniz I."/>
            <person name="Dosti B."/>
            <person name="Smeianov V."/>
            <person name="Wechter W."/>
            <person name="Barabote R."/>
            <person name="Lorca G."/>
            <person name="Altermann E."/>
            <person name="Barrangou R."/>
            <person name="Ganesan B."/>
            <person name="Xie Y."/>
            <person name="Rawsthorne H."/>
            <person name="Tamir D."/>
            <person name="Parker C."/>
            <person name="Breidt F."/>
            <person name="Broadbent J.R."/>
            <person name="Hutkins R."/>
            <person name="O'Sullivan D."/>
            <person name="Steele J."/>
            <person name="Unlu G."/>
            <person name="Saier M.H. Jr."/>
            <person name="Klaenhammer T."/>
            <person name="Richardson P."/>
            <person name="Kozyavkin S."/>
            <person name="Weimer B.C."/>
            <person name="Mills D.A."/>
        </authorList>
    </citation>
    <scope>NUCLEOTIDE SEQUENCE [LARGE SCALE GENOMIC DNA]</scope>
    <source>
        <strain>ATCC 25745 / CCUG 21536 / LMG 10740 / 183-1w</strain>
    </source>
</reference>
<organism>
    <name type="scientific">Pediococcus pentosaceus (strain ATCC 25745 / CCUG 21536 / LMG 10740 / 183-1w)</name>
    <dbReference type="NCBI Taxonomy" id="278197"/>
    <lineage>
        <taxon>Bacteria</taxon>
        <taxon>Bacillati</taxon>
        <taxon>Bacillota</taxon>
        <taxon>Bacilli</taxon>
        <taxon>Lactobacillales</taxon>
        <taxon>Lactobacillaceae</taxon>
        <taxon>Pediococcus</taxon>
    </lineage>
</organism>
<keyword id="KW-0227">DNA damage</keyword>
<keyword id="KW-0233">DNA recombination</keyword>
<keyword id="KW-0234">DNA repair</keyword>
<gene>
    <name evidence="1" type="primary">recO</name>
    <name type="ordered locus">PEPE_1103</name>
</gene>
<evidence type="ECO:0000255" key="1">
    <source>
        <dbReference type="HAMAP-Rule" id="MF_00201"/>
    </source>
</evidence>
<proteinExistence type="inferred from homology"/>
<dbReference type="EMBL" id="CP000422">
    <property type="protein sequence ID" value="ABJ68158.1"/>
    <property type="molecule type" value="Genomic_DNA"/>
</dbReference>
<dbReference type="RefSeq" id="WP_002833409.1">
    <property type="nucleotide sequence ID" value="NC_008525.1"/>
</dbReference>
<dbReference type="SMR" id="Q03F64"/>
<dbReference type="STRING" id="278197.PEPE_1103"/>
<dbReference type="GeneID" id="33062724"/>
<dbReference type="KEGG" id="ppe:PEPE_1103"/>
<dbReference type="eggNOG" id="COG1381">
    <property type="taxonomic scope" value="Bacteria"/>
</dbReference>
<dbReference type="HOGENOM" id="CLU_066632_4_0_9"/>
<dbReference type="OrthoDB" id="9797083at2"/>
<dbReference type="Proteomes" id="UP000000773">
    <property type="component" value="Chromosome"/>
</dbReference>
<dbReference type="GO" id="GO:0043590">
    <property type="term" value="C:bacterial nucleoid"/>
    <property type="evidence" value="ECO:0007669"/>
    <property type="project" value="TreeGrafter"/>
</dbReference>
<dbReference type="GO" id="GO:0006310">
    <property type="term" value="P:DNA recombination"/>
    <property type="evidence" value="ECO:0007669"/>
    <property type="project" value="UniProtKB-UniRule"/>
</dbReference>
<dbReference type="GO" id="GO:0006302">
    <property type="term" value="P:double-strand break repair"/>
    <property type="evidence" value="ECO:0007669"/>
    <property type="project" value="TreeGrafter"/>
</dbReference>
<dbReference type="Gene3D" id="2.40.50.140">
    <property type="entry name" value="Nucleic acid-binding proteins"/>
    <property type="match status" value="1"/>
</dbReference>
<dbReference type="Gene3D" id="1.20.1440.120">
    <property type="entry name" value="Recombination protein O, C-terminal domain"/>
    <property type="match status" value="1"/>
</dbReference>
<dbReference type="HAMAP" id="MF_00201">
    <property type="entry name" value="RecO"/>
    <property type="match status" value="1"/>
</dbReference>
<dbReference type="InterPro" id="IPR037278">
    <property type="entry name" value="ARFGAP/RecO"/>
</dbReference>
<dbReference type="InterPro" id="IPR022572">
    <property type="entry name" value="DNA_rep/recomb_RecO_N"/>
</dbReference>
<dbReference type="InterPro" id="IPR012340">
    <property type="entry name" value="NA-bd_OB-fold"/>
</dbReference>
<dbReference type="InterPro" id="IPR003717">
    <property type="entry name" value="RecO"/>
</dbReference>
<dbReference type="InterPro" id="IPR042242">
    <property type="entry name" value="RecO_C"/>
</dbReference>
<dbReference type="NCBIfam" id="TIGR00613">
    <property type="entry name" value="reco"/>
    <property type="match status" value="1"/>
</dbReference>
<dbReference type="PANTHER" id="PTHR33991">
    <property type="entry name" value="DNA REPAIR PROTEIN RECO"/>
    <property type="match status" value="1"/>
</dbReference>
<dbReference type="PANTHER" id="PTHR33991:SF1">
    <property type="entry name" value="DNA REPAIR PROTEIN RECO"/>
    <property type="match status" value="1"/>
</dbReference>
<dbReference type="Pfam" id="PF02565">
    <property type="entry name" value="RecO_C"/>
    <property type="match status" value="1"/>
</dbReference>
<dbReference type="Pfam" id="PF11967">
    <property type="entry name" value="RecO_N"/>
    <property type="match status" value="1"/>
</dbReference>
<dbReference type="SUPFAM" id="SSF57863">
    <property type="entry name" value="ArfGap/RecO-like zinc finger"/>
    <property type="match status" value="1"/>
</dbReference>
<dbReference type="SUPFAM" id="SSF50249">
    <property type="entry name" value="Nucleic acid-binding proteins"/>
    <property type="match status" value="1"/>
</dbReference>